<keyword id="KW-0056">Arginine metabolism</keyword>
<keyword id="KW-0963">Cytoplasm</keyword>
<keyword id="KW-0808">Transferase</keyword>
<accession>Q8CMW2</accession>
<proteinExistence type="inferred from homology"/>
<feature type="chain" id="PRO_0000113024" description="Ornithine carbamoyltransferase 2, catabolic">
    <location>
        <begin position="1"/>
        <end position="335"/>
    </location>
</feature>
<feature type="binding site" evidence="2">
    <location>
        <begin position="62"/>
        <end position="65"/>
    </location>
    <ligand>
        <name>carbamoyl phosphate</name>
        <dbReference type="ChEBI" id="CHEBI:58228"/>
    </ligand>
</feature>
<feature type="binding site" evidence="2">
    <location>
        <position position="89"/>
    </location>
    <ligand>
        <name>carbamoyl phosphate</name>
        <dbReference type="ChEBI" id="CHEBI:58228"/>
    </ligand>
</feature>
<feature type="binding site" evidence="2">
    <location>
        <position position="113"/>
    </location>
    <ligand>
        <name>carbamoyl phosphate</name>
        <dbReference type="ChEBI" id="CHEBI:58228"/>
    </ligand>
</feature>
<feature type="binding site" evidence="2">
    <location>
        <begin position="140"/>
        <end position="143"/>
    </location>
    <ligand>
        <name>carbamoyl phosphate</name>
        <dbReference type="ChEBI" id="CHEBI:58228"/>
    </ligand>
</feature>
<feature type="binding site" evidence="2">
    <location>
        <position position="172"/>
    </location>
    <ligand>
        <name>L-ornithine</name>
        <dbReference type="ChEBI" id="CHEBI:46911"/>
    </ligand>
</feature>
<feature type="binding site" evidence="2">
    <location>
        <position position="236"/>
    </location>
    <ligand>
        <name>L-ornithine</name>
        <dbReference type="ChEBI" id="CHEBI:46911"/>
    </ligand>
</feature>
<feature type="binding site" evidence="2">
    <location>
        <begin position="240"/>
        <end position="241"/>
    </location>
    <ligand>
        <name>L-ornithine</name>
        <dbReference type="ChEBI" id="CHEBI:46911"/>
    </ligand>
</feature>
<feature type="binding site" evidence="2">
    <location>
        <begin position="277"/>
        <end position="278"/>
    </location>
    <ligand>
        <name>carbamoyl phosphate</name>
        <dbReference type="ChEBI" id="CHEBI:58228"/>
    </ligand>
</feature>
<feature type="binding site" evidence="2">
    <location>
        <position position="322"/>
    </location>
    <ligand>
        <name>carbamoyl phosphate</name>
        <dbReference type="ChEBI" id="CHEBI:58228"/>
    </ligand>
</feature>
<comment type="function">
    <text evidence="1">Reversibly catalyzes the transfer of the carbamoyl group from carbamoyl phosphate (CP) to the N(epsilon) atom of ornithine (ORN) to produce L-citrulline.</text>
</comment>
<comment type="catalytic activity">
    <reaction>
        <text>carbamoyl phosphate + L-ornithine = L-citrulline + phosphate + H(+)</text>
        <dbReference type="Rhea" id="RHEA:19513"/>
        <dbReference type="ChEBI" id="CHEBI:15378"/>
        <dbReference type="ChEBI" id="CHEBI:43474"/>
        <dbReference type="ChEBI" id="CHEBI:46911"/>
        <dbReference type="ChEBI" id="CHEBI:57743"/>
        <dbReference type="ChEBI" id="CHEBI:58228"/>
        <dbReference type="EC" id="2.1.3.3"/>
    </reaction>
</comment>
<comment type="pathway">
    <text>Amino-acid degradation; L-arginine degradation via ADI pathway; carbamoyl phosphate from L-arginine: step 2/2.</text>
</comment>
<comment type="subcellular location">
    <subcellularLocation>
        <location evidence="1">Cytoplasm</location>
    </subcellularLocation>
</comment>
<comment type="similarity">
    <text evidence="3">Belongs to the aspartate/ornithine carbamoyltransferase superfamily. OTCase family.</text>
</comment>
<sequence>MKNIKKPFDLKGKSLLKEYDLTGEEFEGLIDFAMTLKKYKQQGTPHRYLEGKNIALLFEKTSTRTRAAFTVASIDLGAHPEFLGKNDIQLGKKESVEDTAKVLGRMFDGIEFRGFSQKTVEQLAEFSGVPVWNGLTDDWHPTQMLADYMTIKENFGYLKGINLTYVGNGRNNVAHSLMVAGAMLGVNVRICTPSSLTPRDVYFNIAKDQASNYGGSVKITDNIHTAVKDADVIYTDVWVSMGEESEFETRIHLLKDYQVNRKMLNLTGKVDTIFLHCLPAFHDTQTEYGQDIFKKYGLTEMEVTDEIFRSEHSRVFDQAENRMHTIKAVMAATLG</sequence>
<evidence type="ECO:0000250" key="1"/>
<evidence type="ECO:0000255" key="2">
    <source>
        <dbReference type="HAMAP-Rule" id="MF_01109"/>
    </source>
</evidence>
<evidence type="ECO:0000305" key="3"/>
<reference key="1">
    <citation type="journal article" date="2003" name="Mol. Microbiol.">
        <title>Genome-based analysis of virulence genes in a non-biofilm-forming Staphylococcus epidermidis strain (ATCC 12228).</title>
        <authorList>
            <person name="Zhang Y.-Q."/>
            <person name="Ren S.-X."/>
            <person name="Li H.-L."/>
            <person name="Wang Y.-X."/>
            <person name="Fu G."/>
            <person name="Yang J."/>
            <person name="Qin Z.-Q."/>
            <person name="Miao Y.-G."/>
            <person name="Wang W.-Y."/>
            <person name="Chen R.-S."/>
            <person name="Shen Y."/>
            <person name="Chen Z."/>
            <person name="Yuan Z.-H."/>
            <person name="Zhao G.-P."/>
            <person name="Qu D."/>
            <person name="Danchin A."/>
            <person name="Wen Y.-M."/>
        </authorList>
    </citation>
    <scope>NUCLEOTIDE SEQUENCE [LARGE SCALE GENOMIC DNA]</scope>
    <source>
        <strain>ATCC 12228 / FDA PCI 1200</strain>
    </source>
</reference>
<gene>
    <name type="primary">arcB2</name>
    <name type="ordered locus">SE_2216</name>
</gene>
<protein>
    <recommendedName>
        <fullName>Ornithine carbamoyltransferase 2, catabolic</fullName>
        <shortName>OTCase 2</shortName>
        <ecNumber>2.1.3.3</ecNumber>
    </recommendedName>
</protein>
<dbReference type="EC" id="2.1.3.3"/>
<dbReference type="EMBL" id="AE015929">
    <property type="protein sequence ID" value="AAO05858.1"/>
    <property type="molecule type" value="Genomic_DNA"/>
</dbReference>
<dbReference type="RefSeq" id="NP_765771.1">
    <property type="nucleotide sequence ID" value="NC_004461.1"/>
</dbReference>
<dbReference type="SMR" id="Q8CMW2"/>
<dbReference type="KEGG" id="sep:SE_2216"/>
<dbReference type="PATRIC" id="fig|176280.10.peg.2163"/>
<dbReference type="eggNOG" id="COG0078">
    <property type="taxonomic scope" value="Bacteria"/>
</dbReference>
<dbReference type="HOGENOM" id="CLU_043846_3_1_9"/>
<dbReference type="OrthoDB" id="9802587at2"/>
<dbReference type="UniPathway" id="UPA00254">
    <property type="reaction ID" value="UER00365"/>
</dbReference>
<dbReference type="Proteomes" id="UP000001411">
    <property type="component" value="Chromosome"/>
</dbReference>
<dbReference type="GO" id="GO:0005737">
    <property type="term" value="C:cytoplasm"/>
    <property type="evidence" value="ECO:0007669"/>
    <property type="project" value="UniProtKB-SubCell"/>
</dbReference>
<dbReference type="GO" id="GO:0016597">
    <property type="term" value="F:amino acid binding"/>
    <property type="evidence" value="ECO:0007669"/>
    <property type="project" value="InterPro"/>
</dbReference>
<dbReference type="GO" id="GO:0004585">
    <property type="term" value="F:ornithine carbamoyltransferase activity"/>
    <property type="evidence" value="ECO:0007669"/>
    <property type="project" value="UniProtKB-UniRule"/>
</dbReference>
<dbReference type="GO" id="GO:0042450">
    <property type="term" value="P:arginine biosynthetic process via ornithine"/>
    <property type="evidence" value="ECO:0007669"/>
    <property type="project" value="TreeGrafter"/>
</dbReference>
<dbReference type="GO" id="GO:0019547">
    <property type="term" value="P:arginine catabolic process to ornithine"/>
    <property type="evidence" value="ECO:0007669"/>
    <property type="project" value="UniProtKB-UniPathway"/>
</dbReference>
<dbReference type="GO" id="GO:0019240">
    <property type="term" value="P:citrulline biosynthetic process"/>
    <property type="evidence" value="ECO:0007669"/>
    <property type="project" value="TreeGrafter"/>
</dbReference>
<dbReference type="GO" id="GO:0006526">
    <property type="term" value="P:L-arginine biosynthetic process"/>
    <property type="evidence" value="ECO:0007669"/>
    <property type="project" value="UniProtKB-UniRule"/>
</dbReference>
<dbReference type="FunFam" id="3.40.50.1370:FF:000008">
    <property type="entry name" value="Ornithine carbamoyltransferase"/>
    <property type="match status" value="1"/>
</dbReference>
<dbReference type="Gene3D" id="3.40.50.1370">
    <property type="entry name" value="Aspartate/ornithine carbamoyltransferase"/>
    <property type="match status" value="2"/>
</dbReference>
<dbReference type="HAMAP" id="MF_01109">
    <property type="entry name" value="OTCase"/>
    <property type="match status" value="1"/>
</dbReference>
<dbReference type="InterPro" id="IPR006132">
    <property type="entry name" value="Asp/Orn_carbamoyltranf_P-bd"/>
</dbReference>
<dbReference type="InterPro" id="IPR006130">
    <property type="entry name" value="Asp/Orn_carbamoylTrfase"/>
</dbReference>
<dbReference type="InterPro" id="IPR036901">
    <property type="entry name" value="Asp/Orn_carbamoylTrfase_sf"/>
</dbReference>
<dbReference type="InterPro" id="IPR006131">
    <property type="entry name" value="Asp_carbamoyltransf_Asp/Orn-bd"/>
</dbReference>
<dbReference type="InterPro" id="IPR002292">
    <property type="entry name" value="Orn/put_carbamltrans"/>
</dbReference>
<dbReference type="InterPro" id="IPR024904">
    <property type="entry name" value="OTCase_ArgI"/>
</dbReference>
<dbReference type="NCBIfam" id="TIGR00658">
    <property type="entry name" value="orni_carb_tr"/>
    <property type="match status" value="1"/>
</dbReference>
<dbReference type="NCBIfam" id="NF001986">
    <property type="entry name" value="PRK00779.1"/>
    <property type="match status" value="1"/>
</dbReference>
<dbReference type="PANTHER" id="PTHR45753:SF1">
    <property type="entry name" value="ORNITHINE CARBAMOYLTRANSFERASE, CATABOLIC"/>
    <property type="match status" value="1"/>
</dbReference>
<dbReference type="PANTHER" id="PTHR45753">
    <property type="entry name" value="ORNITHINE CARBAMOYLTRANSFERASE, MITOCHONDRIAL"/>
    <property type="match status" value="1"/>
</dbReference>
<dbReference type="Pfam" id="PF00185">
    <property type="entry name" value="OTCace"/>
    <property type="match status" value="1"/>
</dbReference>
<dbReference type="Pfam" id="PF02729">
    <property type="entry name" value="OTCace_N"/>
    <property type="match status" value="1"/>
</dbReference>
<dbReference type="PRINTS" id="PR00100">
    <property type="entry name" value="AOTCASE"/>
</dbReference>
<dbReference type="PRINTS" id="PR00102">
    <property type="entry name" value="OTCASE"/>
</dbReference>
<dbReference type="SUPFAM" id="SSF53671">
    <property type="entry name" value="Aspartate/ornithine carbamoyltransferase"/>
    <property type="match status" value="1"/>
</dbReference>
<dbReference type="PROSITE" id="PS00097">
    <property type="entry name" value="CARBAMOYLTRANSFERASE"/>
    <property type="match status" value="1"/>
</dbReference>
<name>OTCC2_STAES</name>
<organism>
    <name type="scientific">Staphylococcus epidermidis (strain ATCC 12228 / FDA PCI 1200)</name>
    <dbReference type="NCBI Taxonomy" id="176280"/>
    <lineage>
        <taxon>Bacteria</taxon>
        <taxon>Bacillati</taxon>
        <taxon>Bacillota</taxon>
        <taxon>Bacilli</taxon>
        <taxon>Bacillales</taxon>
        <taxon>Staphylococcaceae</taxon>
        <taxon>Staphylococcus</taxon>
    </lineage>
</organism>